<gene>
    <name evidence="1" type="primary">surE</name>
    <name type="ordered locus">SbBS512_E3130</name>
</gene>
<feature type="chain" id="PRO_1000092038" description="5'/3'-nucleotidase SurE">
    <location>
        <begin position="1"/>
        <end position="253"/>
    </location>
</feature>
<feature type="binding site" evidence="1">
    <location>
        <position position="8"/>
    </location>
    <ligand>
        <name>a divalent metal cation</name>
        <dbReference type="ChEBI" id="CHEBI:60240"/>
    </ligand>
</feature>
<feature type="binding site" evidence="1">
    <location>
        <position position="9"/>
    </location>
    <ligand>
        <name>a divalent metal cation</name>
        <dbReference type="ChEBI" id="CHEBI:60240"/>
    </ligand>
</feature>
<feature type="binding site" evidence="1">
    <location>
        <position position="39"/>
    </location>
    <ligand>
        <name>a divalent metal cation</name>
        <dbReference type="ChEBI" id="CHEBI:60240"/>
    </ligand>
</feature>
<feature type="binding site" evidence="1">
    <location>
        <position position="92"/>
    </location>
    <ligand>
        <name>a divalent metal cation</name>
        <dbReference type="ChEBI" id="CHEBI:60240"/>
    </ligand>
</feature>
<name>SURE_SHIB3</name>
<keyword id="KW-0963">Cytoplasm</keyword>
<keyword id="KW-0378">Hydrolase</keyword>
<keyword id="KW-0479">Metal-binding</keyword>
<keyword id="KW-0547">Nucleotide-binding</keyword>
<keyword id="KW-1185">Reference proteome</keyword>
<organism>
    <name type="scientific">Shigella boydii serotype 18 (strain CDC 3083-94 / BS512)</name>
    <dbReference type="NCBI Taxonomy" id="344609"/>
    <lineage>
        <taxon>Bacteria</taxon>
        <taxon>Pseudomonadati</taxon>
        <taxon>Pseudomonadota</taxon>
        <taxon>Gammaproteobacteria</taxon>
        <taxon>Enterobacterales</taxon>
        <taxon>Enterobacteriaceae</taxon>
        <taxon>Shigella</taxon>
    </lineage>
</organism>
<evidence type="ECO:0000255" key="1">
    <source>
        <dbReference type="HAMAP-Rule" id="MF_00060"/>
    </source>
</evidence>
<reference key="1">
    <citation type="submission" date="2008-05" db="EMBL/GenBank/DDBJ databases">
        <title>Complete sequence of Shigella boydii serotype 18 strain BS512.</title>
        <authorList>
            <person name="Rasko D.A."/>
            <person name="Rosovitz M."/>
            <person name="Maurelli A.T."/>
            <person name="Myers G."/>
            <person name="Seshadri R."/>
            <person name="Cer R."/>
            <person name="Jiang L."/>
            <person name="Ravel J."/>
            <person name="Sebastian Y."/>
        </authorList>
    </citation>
    <scope>NUCLEOTIDE SEQUENCE [LARGE SCALE GENOMIC DNA]</scope>
    <source>
        <strain>CDC 3083-94 / BS512</strain>
    </source>
</reference>
<proteinExistence type="inferred from homology"/>
<dbReference type="EC" id="3.1.3.5" evidence="1"/>
<dbReference type="EC" id="3.1.3.6" evidence="1"/>
<dbReference type="EC" id="3.6.1.11" evidence="1"/>
<dbReference type="EMBL" id="CP001063">
    <property type="protein sequence ID" value="ACD09778.1"/>
    <property type="molecule type" value="Genomic_DNA"/>
</dbReference>
<dbReference type="RefSeq" id="WP_001295182.1">
    <property type="nucleotide sequence ID" value="NC_010658.1"/>
</dbReference>
<dbReference type="SMR" id="B2TZI7"/>
<dbReference type="STRING" id="344609.SbBS512_E3130"/>
<dbReference type="GeneID" id="93779262"/>
<dbReference type="KEGG" id="sbc:SbBS512_E3130"/>
<dbReference type="HOGENOM" id="CLU_045192_1_2_6"/>
<dbReference type="Proteomes" id="UP000001030">
    <property type="component" value="Chromosome"/>
</dbReference>
<dbReference type="GO" id="GO:0005737">
    <property type="term" value="C:cytoplasm"/>
    <property type="evidence" value="ECO:0007669"/>
    <property type="project" value="UniProtKB-SubCell"/>
</dbReference>
<dbReference type="GO" id="GO:0008254">
    <property type="term" value="F:3'-nucleotidase activity"/>
    <property type="evidence" value="ECO:0007669"/>
    <property type="project" value="UniProtKB-UniRule"/>
</dbReference>
<dbReference type="GO" id="GO:0008253">
    <property type="term" value="F:5'-nucleotidase activity"/>
    <property type="evidence" value="ECO:0007669"/>
    <property type="project" value="UniProtKB-UniRule"/>
</dbReference>
<dbReference type="GO" id="GO:0004309">
    <property type="term" value="F:exopolyphosphatase activity"/>
    <property type="evidence" value="ECO:0007669"/>
    <property type="project" value="UniProtKB-UniRule"/>
</dbReference>
<dbReference type="GO" id="GO:0046872">
    <property type="term" value="F:metal ion binding"/>
    <property type="evidence" value="ECO:0007669"/>
    <property type="project" value="UniProtKB-UniRule"/>
</dbReference>
<dbReference type="GO" id="GO:0000166">
    <property type="term" value="F:nucleotide binding"/>
    <property type="evidence" value="ECO:0007669"/>
    <property type="project" value="UniProtKB-KW"/>
</dbReference>
<dbReference type="FunFam" id="3.40.1210.10:FF:000001">
    <property type="entry name" value="5'/3'-nucleotidase SurE"/>
    <property type="match status" value="1"/>
</dbReference>
<dbReference type="Gene3D" id="3.40.1210.10">
    <property type="entry name" value="Survival protein SurE-like phosphatase/nucleotidase"/>
    <property type="match status" value="1"/>
</dbReference>
<dbReference type="HAMAP" id="MF_00060">
    <property type="entry name" value="SurE"/>
    <property type="match status" value="1"/>
</dbReference>
<dbReference type="InterPro" id="IPR030048">
    <property type="entry name" value="SurE"/>
</dbReference>
<dbReference type="InterPro" id="IPR002828">
    <property type="entry name" value="SurE-like_Pase/nucleotidase"/>
</dbReference>
<dbReference type="InterPro" id="IPR036523">
    <property type="entry name" value="SurE-like_sf"/>
</dbReference>
<dbReference type="NCBIfam" id="NF001488">
    <property type="entry name" value="PRK00346.1-1"/>
    <property type="match status" value="1"/>
</dbReference>
<dbReference type="NCBIfam" id="NF001489">
    <property type="entry name" value="PRK00346.1-3"/>
    <property type="match status" value="1"/>
</dbReference>
<dbReference type="NCBIfam" id="NF001490">
    <property type="entry name" value="PRK00346.1-4"/>
    <property type="match status" value="1"/>
</dbReference>
<dbReference type="NCBIfam" id="TIGR00087">
    <property type="entry name" value="surE"/>
    <property type="match status" value="1"/>
</dbReference>
<dbReference type="PANTHER" id="PTHR30457">
    <property type="entry name" value="5'-NUCLEOTIDASE SURE"/>
    <property type="match status" value="1"/>
</dbReference>
<dbReference type="PANTHER" id="PTHR30457:SF12">
    <property type="entry name" value="5'_3'-NUCLEOTIDASE SURE"/>
    <property type="match status" value="1"/>
</dbReference>
<dbReference type="Pfam" id="PF01975">
    <property type="entry name" value="SurE"/>
    <property type="match status" value="1"/>
</dbReference>
<dbReference type="SUPFAM" id="SSF64167">
    <property type="entry name" value="SurE-like"/>
    <property type="match status" value="1"/>
</dbReference>
<comment type="function">
    <text evidence="1">Nucleotidase with a broad substrate specificity as it can dephosphorylate various ribo- and deoxyribonucleoside 5'-monophosphates and ribonucleoside 3'-monophosphates with highest affinity to 3'-AMP. Also hydrolyzes polyphosphate (exopolyphosphatase activity) with the preference for short-chain-length substrates (P20-25). Might be involved in the regulation of dNTP and NTP pools, and in the turnover of 3'-mononucleotides produced by numerous intracellular RNases (T1, T2, and F) during the degradation of various RNAs.</text>
</comment>
<comment type="catalytic activity">
    <reaction evidence="1">
        <text>a ribonucleoside 5'-phosphate + H2O = a ribonucleoside + phosphate</text>
        <dbReference type="Rhea" id="RHEA:12484"/>
        <dbReference type="ChEBI" id="CHEBI:15377"/>
        <dbReference type="ChEBI" id="CHEBI:18254"/>
        <dbReference type="ChEBI" id="CHEBI:43474"/>
        <dbReference type="ChEBI" id="CHEBI:58043"/>
        <dbReference type="EC" id="3.1.3.5"/>
    </reaction>
</comment>
<comment type="catalytic activity">
    <reaction evidence="1">
        <text>a ribonucleoside 3'-phosphate + H2O = a ribonucleoside + phosphate</text>
        <dbReference type="Rhea" id="RHEA:10144"/>
        <dbReference type="ChEBI" id="CHEBI:13197"/>
        <dbReference type="ChEBI" id="CHEBI:15377"/>
        <dbReference type="ChEBI" id="CHEBI:18254"/>
        <dbReference type="ChEBI" id="CHEBI:43474"/>
        <dbReference type="EC" id="3.1.3.6"/>
    </reaction>
</comment>
<comment type="catalytic activity">
    <reaction evidence="1">
        <text>[phosphate](n) + H2O = [phosphate](n-1) + phosphate + H(+)</text>
        <dbReference type="Rhea" id="RHEA:21528"/>
        <dbReference type="Rhea" id="RHEA-COMP:9859"/>
        <dbReference type="Rhea" id="RHEA-COMP:14279"/>
        <dbReference type="ChEBI" id="CHEBI:15377"/>
        <dbReference type="ChEBI" id="CHEBI:15378"/>
        <dbReference type="ChEBI" id="CHEBI:16838"/>
        <dbReference type="ChEBI" id="CHEBI:43474"/>
        <dbReference type="EC" id="3.6.1.11"/>
    </reaction>
</comment>
<comment type="cofactor">
    <cofactor evidence="1">
        <name>a divalent metal cation</name>
        <dbReference type="ChEBI" id="CHEBI:60240"/>
    </cofactor>
    <text evidence="1">Binds 1 divalent metal cation per subunit.</text>
</comment>
<comment type="subcellular location">
    <subcellularLocation>
        <location evidence="1">Cytoplasm</location>
    </subcellularLocation>
</comment>
<comment type="similarity">
    <text evidence="1">Belongs to the SurE nucleotidase family.</text>
</comment>
<sequence>MRILLSNDDGVHAPGIQTLAKALREFADVQVVAPDRNRSGASNSLTLESSLRTFTFENGDIAVQMGTPTDCVYLGVNALMRPRPDIVVSGINAGPNLGDDVIYSGTVAAAMEGRHLGFPALAVSLDGHKHYDTAAAVTCSILRALCKEPLRTGRILNINVPDLPLDQIKGIRVTRCGTRHPADQVIPQQDPRGNTLYWIGPPGGKCDAGPGTDFAAVDEGYVSITPLHVDLTAHSAQDVVSDWLNSVGVGTQW</sequence>
<protein>
    <recommendedName>
        <fullName evidence="1">5'/3'-nucleotidase SurE</fullName>
        <ecNumber evidence="1">3.1.3.5</ecNumber>
        <ecNumber evidence="1">3.1.3.6</ecNumber>
    </recommendedName>
    <alternativeName>
        <fullName evidence="1">Exopolyphosphatase</fullName>
        <ecNumber evidence="1">3.6.1.11</ecNumber>
    </alternativeName>
    <alternativeName>
        <fullName evidence="1">Nucleoside monophosphate phosphohydrolase</fullName>
    </alternativeName>
</protein>
<accession>B2TZI7</accession>